<accession>Q7NS98</accession>
<keyword id="KW-0963">Cytoplasm</keyword>
<keyword id="KW-0342">GTP-binding</keyword>
<keyword id="KW-0436">Ligase</keyword>
<keyword id="KW-0460">Magnesium</keyword>
<keyword id="KW-0479">Metal-binding</keyword>
<keyword id="KW-0547">Nucleotide-binding</keyword>
<keyword id="KW-0658">Purine biosynthesis</keyword>
<keyword id="KW-1185">Reference proteome</keyword>
<proteinExistence type="inferred from homology"/>
<dbReference type="EC" id="6.3.4.4" evidence="1"/>
<dbReference type="EMBL" id="AE016825">
    <property type="protein sequence ID" value="AAQ61190.1"/>
    <property type="molecule type" value="Genomic_DNA"/>
</dbReference>
<dbReference type="RefSeq" id="WP_011137075.1">
    <property type="nucleotide sequence ID" value="NC_005085.1"/>
</dbReference>
<dbReference type="SMR" id="Q7NS98"/>
<dbReference type="STRING" id="243365.CV_3528"/>
<dbReference type="GeneID" id="66364755"/>
<dbReference type="KEGG" id="cvi:CV_3528"/>
<dbReference type="eggNOG" id="COG0104">
    <property type="taxonomic scope" value="Bacteria"/>
</dbReference>
<dbReference type="HOGENOM" id="CLU_029848_0_0_4"/>
<dbReference type="OrthoDB" id="9807553at2"/>
<dbReference type="UniPathway" id="UPA00075">
    <property type="reaction ID" value="UER00335"/>
</dbReference>
<dbReference type="Proteomes" id="UP000001424">
    <property type="component" value="Chromosome"/>
</dbReference>
<dbReference type="GO" id="GO:0005737">
    <property type="term" value="C:cytoplasm"/>
    <property type="evidence" value="ECO:0007669"/>
    <property type="project" value="UniProtKB-SubCell"/>
</dbReference>
<dbReference type="GO" id="GO:0004019">
    <property type="term" value="F:adenylosuccinate synthase activity"/>
    <property type="evidence" value="ECO:0007669"/>
    <property type="project" value="UniProtKB-UniRule"/>
</dbReference>
<dbReference type="GO" id="GO:0005525">
    <property type="term" value="F:GTP binding"/>
    <property type="evidence" value="ECO:0007669"/>
    <property type="project" value="UniProtKB-UniRule"/>
</dbReference>
<dbReference type="GO" id="GO:0000287">
    <property type="term" value="F:magnesium ion binding"/>
    <property type="evidence" value="ECO:0007669"/>
    <property type="project" value="UniProtKB-UniRule"/>
</dbReference>
<dbReference type="GO" id="GO:0044208">
    <property type="term" value="P:'de novo' AMP biosynthetic process"/>
    <property type="evidence" value="ECO:0007669"/>
    <property type="project" value="UniProtKB-UniRule"/>
</dbReference>
<dbReference type="GO" id="GO:0046040">
    <property type="term" value="P:IMP metabolic process"/>
    <property type="evidence" value="ECO:0007669"/>
    <property type="project" value="TreeGrafter"/>
</dbReference>
<dbReference type="CDD" id="cd03108">
    <property type="entry name" value="AdSS"/>
    <property type="match status" value="1"/>
</dbReference>
<dbReference type="FunFam" id="1.10.300.10:FF:000001">
    <property type="entry name" value="Adenylosuccinate synthetase"/>
    <property type="match status" value="1"/>
</dbReference>
<dbReference type="FunFam" id="3.90.170.10:FF:000001">
    <property type="entry name" value="Adenylosuccinate synthetase"/>
    <property type="match status" value="1"/>
</dbReference>
<dbReference type="Gene3D" id="3.40.440.10">
    <property type="entry name" value="Adenylosuccinate Synthetase, subunit A, domain 1"/>
    <property type="match status" value="1"/>
</dbReference>
<dbReference type="Gene3D" id="1.10.300.10">
    <property type="entry name" value="Adenylosuccinate Synthetase, subunit A, domain 2"/>
    <property type="match status" value="1"/>
</dbReference>
<dbReference type="Gene3D" id="3.90.170.10">
    <property type="entry name" value="Adenylosuccinate Synthetase, subunit A, domain 3"/>
    <property type="match status" value="1"/>
</dbReference>
<dbReference type="HAMAP" id="MF_00011">
    <property type="entry name" value="Adenylosucc_synth"/>
    <property type="match status" value="1"/>
</dbReference>
<dbReference type="InterPro" id="IPR018220">
    <property type="entry name" value="Adenylosuccin_syn_GTP-bd"/>
</dbReference>
<dbReference type="InterPro" id="IPR033128">
    <property type="entry name" value="Adenylosuccin_syn_Lys_AS"/>
</dbReference>
<dbReference type="InterPro" id="IPR042109">
    <property type="entry name" value="Adenylosuccinate_synth_dom1"/>
</dbReference>
<dbReference type="InterPro" id="IPR042110">
    <property type="entry name" value="Adenylosuccinate_synth_dom2"/>
</dbReference>
<dbReference type="InterPro" id="IPR042111">
    <property type="entry name" value="Adenylosuccinate_synth_dom3"/>
</dbReference>
<dbReference type="InterPro" id="IPR001114">
    <property type="entry name" value="Adenylosuccinate_synthetase"/>
</dbReference>
<dbReference type="InterPro" id="IPR027417">
    <property type="entry name" value="P-loop_NTPase"/>
</dbReference>
<dbReference type="NCBIfam" id="NF002223">
    <property type="entry name" value="PRK01117.1"/>
    <property type="match status" value="1"/>
</dbReference>
<dbReference type="NCBIfam" id="TIGR00184">
    <property type="entry name" value="purA"/>
    <property type="match status" value="1"/>
</dbReference>
<dbReference type="PANTHER" id="PTHR11846">
    <property type="entry name" value="ADENYLOSUCCINATE SYNTHETASE"/>
    <property type="match status" value="1"/>
</dbReference>
<dbReference type="PANTHER" id="PTHR11846:SF0">
    <property type="entry name" value="ADENYLOSUCCINATE SYNTHETASE"/>
    <property type="match status" value="1"/>
</dbReference>
<dbReference type="Pfam" id="PF00709">
    <property type="entry name" value="Adenylsucc_synt"/>
    <property type="match status" value="1"/>
</dbReference>
<dbReference type="SMART" id="SM00788">
    <property type="entry name" value="Adenylsucc_synt"/>
    <property type="match status" value="1"/>
</dbReference>
<dbReference type="SUPFAM" id="SSF52540">
    <property type="entry name" value="P-loop containing nucleoside triphosphate hydrolases"/>
    <property type="match status" value="1"/>
</dbReference>
<dbReference type="PROSITE" id="PS01266">
    <property type="entry name" value="ADENYLOSUCCIN_SYN_1"/>
    <property type="match status" value="1"/>
</dbReference>
<dbReference type="PROSITE" id="PS00513">
    <property type="entry name" value="ADENYLOSUCCIN_SYN_2"/>
    <property type="match status" value="1"/>
</dbReference>
<comment type="function">
    <text evidence="1">Plays an important role in the de novo pathway of purine nucleotide biosynthesis. Catalyzes the first committed step in the biosynthesis of AMP from IMP.</text>
</comment>
<comment type="catalytic activity">
    <reaction evidence="1">
        <text>IMP + L-aspartate + GTP = N(6)-(1,2-dicarboxyethyl)-AMP + GDP + phosphate + 2 H(+)</text>
        <dbReference type="Rhea" id="RHEA:15753"/>
        <dbReference type="ChEBI" id="CHEBI:15378"/>
        <dbReference type="ChEBI" id="CHEBI:29991"/>
        <dbReference type="ChEBI" id="CHEBI:37565"/>
        <dbReference type="ChEBI" id="CHEBI:43474"/>
        <dbReference type="ChEBI" id="CHEBI:57567"/>
        <dbReference type="ChEBI" id="CHEBI:58053"/>
        <dbReference type="ChEBI" id="CHEBI:58189"/>
        <dbReference type="EC" id="6.3.4.4"/>
    </reaction>
</comment>
<comment type="cofactor">
    <cofactor evidence="1">
        <name>Mg(2+)</name>
        <dbReference type="ChEBI" id="CHEBI:18420"/>
    </cofactor>
    <text evidence="1">Binds 1 Mg(2+) ion per subunit.</text>
</comment>
<comment type="pathway">
    <text evidence="1">Purine metabolism; AMP biosynthesis via de novo pathway; AMP from IMP: step 1/2.</text>
</comment>
<comment type="subunit">
    <text evidence="1">Homodimer.</text>
</comment>
<comment type="subcellular location">
    <subcellularLocation>
        <location evidence="1">Cytoplasm</location>
    </subcellularLocation>
</comment>
<comment type="similarity">
    <text evidence="1">Belongs to the adenylosuccinate synthetase family.</text>
</comment>
<sequence length="431" mass="46638">MSKNVVVIGTQWGDEGKGKIVDWLTDHARAVVRFQGGHNAGHTLWVNGKKTVVRLVPSGILRPDVECFIGNGVVLSPEALLKEIDELEAAGVNASARLKIAEGCPLILPYHIALDQAREAAKGDAKIGTTGRGIGPCYEDKVARRALKVIDLFDPARFETKLKENVDYYNFLLTNLFKAEPVSYEAILADTMKMAERIKPMVADVSRTLYDLDKAGTPILFEGAQGTLLDIDHGTYPYVTSSNCVAGAAAPGAGVPPQMLNYVLGIVKGYATRVGSGPFPTEQENEIGAFLAKRGNEFGSVTGRPRRCGWFDAAALKRSIQINGVSGLCVMKLDVMDGLEEIKLCTGYMLDGQKVDILPFGSDAVTKCEPVYETLPGWTGTTVGVKRWEDLPANAQAYLKRIEEVCGAPVDIVSTGPDREETIVLRHPFGL</sequence>
<protein>
    <recommendedName>
        <fullName evidence="1">Adenylosuccinate synthetase 2</fullName>
        <shortName evidence="1">AMPSase 2</shortName>
        <shortName evidence="1">AdSS 2</shortName>
        <ecNumber evidence="1">6.3.4.4</ecNumber>
    </recommendedName>
    <alternativeName>
        <fullName evidence="1">IMP--aspartate ligase 2</fullName>
    </alternativeName>
</protein>
<reference key="1">
    <citation type="journal article" date="2003" name="Proc. Natl. Acad. Sci. U.S.A.">
        <title>The complete genome sequence of Chromobacterium violaceum reveals remarkable and exploitable bacterial adaptability.</title>
        <authorList>
            <person name="Vasconcelos A.T.R."/>
            <person name="de Almeida D.F."/>
            <person name="Hungria M."/>
            <person name="Guimaraes C.T."/>
            <person name="Antonio R.V."/>
            <person name="Almeida F.C."/>
            <person name="de Almeida L.G.P."/>
            <person name="de Almeida R."/>
            <person name="Alves-Gomes J.A."/>
            <person name="Andrade E.M."/>
            <person name="Araripe J."/>
            <person name="de Araujo M.F.F."/>
            <person name="Astolfi-Filho S."/>
            <person name="Azevedo V."/>
            <person name="Baptista A.J."/>
            <person name="Bataus L.A.M."/>
            <person name="Batista J.S."/>
            <person name="Belo A."/>
            <person name="van den Berg C."/>
            <person name="Bogo M."/>
            <person name="Bonatto S."/>
            <person name="Bordignon J."/>
            <person name="Brigido M.M."/>
            <person name="Brito C.A."/>
            <person name="Brocchi M."/>
            <person name="Burity H.A."/>
            <person name="Camargo A.A."/>
            <person name="Cardoso D.D.P."/>
            <person name="Carneiro N.P."/>
            <person name="Carraro D.M."/>
            <person name="Carvalho C.M.B."/>
            <person name="Cascardo J.C.M."/>
            <person name="Cavada B.S."/>
            <person name="Chueire L.M.O."/>
            <person name="Creczynski-Pasa T.B."/>
            <person name="Cunha-Junior N.C."/>
            <person name="Fagundes N."/>
            <person name="Falcao C.L."/>
            <person name="Fantinatti F."/>
            <person name="Farias I.P."/>
            <person name="Felipe M.S.S."/>
            <person name="Ferrari L.P."/>
            <person name="Ferro J.A."/>
            <person name="Ferro M.I.T."/>
            <person name="Franco G.R."/>
            <person name="Freitas N.S.A."/>
            <person name="Furlan L.R."/>
            <person name="Gazzinelli R.T."/>
            <person name="Gomes E.A."/>
            <person name="Goncalves P.R."/>
            <person name="Grangeiro T.B."/>
            <person name="Grattapaglia D."/>
            <person name="Grisard E.C."/>
            <person name="Hanna E.S."/>
            <person name="Jardim S.N."/>
            <person name="Laurino J."/>
            <person name="Leoi L.C.T."/>
            <person name="Lima L.F.A."/>
            <person name="Loureiro M.F."/>
            <person name="Lyra M.C.C.P."/>
            <person name="Madeira H.M.F."/>
            <person name="Manfio G.P."/>
            <person name="Maranhao A.Q."/>
            <person name="Martins W.S."/>
            <person name="di Mauro S.M.Z."/>
            <person name="de Medeiros S.R.B."/>
            <person name="Meissner R.V."/>
            <person name="Moreira M.A.M."/>
            <person name="Nascimento F.F."/>
            <person name="Nicolas M.F."/>
            <person name="Oliveira J.G."/>
            <person name="Oliveira S.C."/>
            <person name="Paixao R.F.C."/>
            <person name="Parente J.A."/>
            <person name="Pedrosa F.O."/>
            <person name="Pena S.D.J."/>
            <person name="Pereira J.O."/>
            <person name="Pereira M."/>
            <person name="Pinto L.S.R.C."/>
            <person name="Pinto L.S."/>
            <person name="Porto J.I.R."/>
            <person name="Potrich D.P."/>
            <person name="Ramalho-Neto C.E."/>
            <person name="Reis A.M.M."/>
            <person name="Rigo L.U."/>
            <person name="Rondinelli E."/>
            <person name="Santos E.B.P."/>
            <person name="Santos F.R."/>
            <person name="Schneider M.P.C."/>
            <person name="Seuanez H.N."/>
            <person name="Silva A.M.R."/>
            <person name="da Silva A.L.C."/>
            <person name="Silva D.W."/>
            <person name="Silva R."/>
            <person name="Simoes I.C."/>
            <person name="Simon D."/>
            <person name="Soares C.M.A."/>
            <person name="Soares R.B.A."/>
            <person name="Souza E.M."/>
            <person name="Souza K.R.L."/>
            <person name="Souza R.C."/>
            <person name="Steffens M.B.R."/>
            <person name="Steindel M."/>
            <person name="Teixeira S.R."/>
            <person name="Urmenyi T."/>
            <person name="Vettore A."/>
            <person name="Wassem R."/>
            <person name="Zaha A."/>
            <person name="Simpson A.J.G."/>
        </authorList>
    </citation>
    <scope>NUCLEOTIDE SEQUENCE [LARGE SCALE GENOMIC DNA]</scope>
    <source>
        <strain>ATCC 12472 / DSM 30191 / JCM 1249 / CCUG 213 / NBRC 12614 / NCIMB 9131 / NCTC 9757 / MK</strain>
    </source>
</reference>
<evidence type="ECO:0000255" key="1">
    <source>
        <dbReference type="HAMAP-Rule" id="MF_00011"/>
    </source>
</evidence>
<name>PURA2_CHRVO</name>
<gene>
    <name evidence="1" type="primary">purA2</name>
    <name type="ordered locus">CV_3528</name>
</gene>
<organism>
    <name type="scientific">Chromobacterium violaceum (strain ATCC 12472 / DSM 30191 / JCM 1249 / CCUG 213 / NBRC 12614 / NCIMB 9131 / NCTC 9757 / MK)</name>
    <dbReference type="NCBI Taxonomy" id="243365"/>
    <lineage>
        <taxon>Bacteria</taxon>
        <taxon>Pseudomonadati</taxon>
        <taxon>Pseudomonadota</taxon>
        <taxon>Betaproteobacteria</taxon>
        <taxon>Neisseriales</taxon>
        <taxon>Chromobacteriaceae</taxon>
        <taxon>Chromobacterium</taxon>
    </lineage>
</organism>
<feature type="chain" id="PRO_0000095166" description="Adenylosuccinate synthetase 2">
    <location>
        <begin position="1"/>
        <end position="431"/>
    </location>
</feature>
<feature type="active site" description="Proton acceptor" evidence="1">
    <location>
        <position position="14"/>
    </location>
</feature>
<feature type="active site" description="Proton donor" evidence="1">
    <location>
        <position position="42"/>
    </location>
</feature>
<feature type="binding site" evidence="1">
    <location>
        <begin position="13"/>
        <end position="19"/>
    </location>
    <ligand>
        <name>GTP</name>
        <dbReference type="ChEBI" id="CHEBI:37565"/>
    </ligand>
</feature>
<feature type="binding site" description="in other chain" evidence="1">
    <location>
        <begin position="14"/>
        <end position="17"/>
    </location>
    <ligand>
        <name>IMP</name>
        <dbReference type="ChEBI" id="CHEBI:58053"/>
        <note>ligand shared between dimeric partners</note>
    </ligand>
</feature>
<feature type="binding site" evidence="1">
    <location>
        <position position="14"/>
    </location>
    <ligand>
        <name>Mg(2+)</name>
        <dbReference type="ChEBI" id="CHEBI:18420"/>
    </ligand>
</feature>
<feature type="binding site" description="in other chain" evidence="1">
    <location>
        <begin position="39"/>
        <end position="42"/>
    </location>
    <ligand>
        <name>IMP</name>
        <dbReference type="ChEBI" id="CHEBI:58053"/>
        <note>ligand shared between dimeric partners</note>
    </ligand>
</feature>
<feature type="binding site" evidence="1">
    <location>
        <begin position="41"/>
        <end position="43"/>
    </location>
    <ligand>
        <name>GTP</name>
        <dbReference type="ChEBI" id="CHEBI:37565"/>
    </ligand>
</feature>
<feature type="binding site" evidence="1">
    <location>
        <position position="41"/>
    </location>
    <ligand>
        <name>Mg(2+)</name>
        <dbReference type="ChEBI" id="CHEBI:18420"/>
    </ligand>
</feature>
<feature type="binding site" description="in other chain" evidence="1">
    <location>
        <position position="130"/>
    </location>
    <ligand>
        <name>IMP</name>
        <dbReference type="ChEBI" id="CHEBI:58053"/>
        <note>ligand shared between dimeric partners</note>
    </ligand>
</feature>
<feature type="binding site" evidence="1">
    <location>
        <position position="144"/>
    </location>
    <ligand>
        <name>IMP</name>
        <dbReference type="ChEBI" id="CHEBI:58053"/>
        <note>ligand shared between dimeric partners</note>
    </ligand>
</feature>
<feature type="binding site" description="in other chain" evidence="1">
    <location>
        <position position="225"/>
    </location>
    <ligand>
        <name>IMP</name>
        <dbReference type="ChEBI" id="CHEBI:58053"/>
        <note>ligand shared between dimeric partners</note>
    </ligand>
</feature>
<feature type="binding site" description="in other chain" evidence="1">
    <location>
        <position position="240"/>
    </location>
    <ligand>
        <name>IMP</name>
        <dbReference type="ChEBI" id="CHEBI:58053"/>
        <note>ligand shared between dimeric partners</note>
    </ligand>
</feature>
<feature type="binding site" evidence="1">
    <location>
        <begin position="300"/>
        <end position="306"/>
    </location>
    <ligand>
        <name>substrate</name>
    </ligand>
</feature>
<feature type="binding site" description="in other chain" evidence="1">
    <location>
        <position position="304"/>
    </location>
    <ligand>
        <name>IMP</name>
        <dbReference type="ChEBI" id="CHEBI:58053"/>
        <note>ligand shared between dimeric partners</note>
    </ligand>
</feature>
<feature type="binding site" evidence="1">
    <location>
        <position position="306"/>
    </location>
    <ligand>
        <name>GTP</name>
        <dbReference type="ChEBI" id="CHEBI:37565"/>
    </ligand>
</feature>
<feature type="binding site" evidence="1">
    <location>
        <begin position="332"/>
        <end position="334"/>
    </location>
    <ligand>
        <name>GTP</name>
        <dbReference type="ChEBI" id="CHEBI:37565"/>
    </ligand>
</feature>
<feature type="binding site" evidence="1">
    <location>
        <begin position="414"/>
        <end position="416"/>
    </location>
    <ligand>
        <name>GTP</name>
        <dbReference type="ChEBI" id="CHEBI:37565"/>
    </ligand>
</feature>